<protein>
    <recommendedName>
        <fullName evidence="1">Sec-independent protein translocase protein TatB</fullName>
    </recommendedName>
</protein>
<keyword id="KW-0997">Cell inner membrane</keyword>
<keyword id="KW-1003">Cell membrane</keyword>
<keyword id="KW-0472">Membrane</keyword>
<keyword id="KW-0653">Protein transport</keyword>
<keyword id="KW-0811">Translocation</keyword>
<keyword id="KW-0812">Transmembrane</keyword>
<keyword id="KW-1133">Transmembrane helix</keyword>
<keyword id="KW-0813">Transport</keyword>
<organism>
    <name type="scientific">Xanthomonas euvesicatoria pv. vesicatoria (strain 85-10)</name>
    <name type="common">Xanthomonas campestris pv. vesicatoria</name>
    <dbReference type="NCBI Taxonomy" id="316273"/>
    <lineage>
        <taxon>Bacteria</taxon>
        <taxon>Pseudomonadati</taxon>
        <taxon>Pseudomonadota</taxon>
        <taxon>Gammaproteobacteria</taxon>
        <taxon>Lysobacterales</taxon>
        <taxon>Lysobacteraceae</taxon>
        <taxon>Xanthomonas</taxon>
    </lineage>
</organism>
<dbReference type="EMBL" id="AM039952">
    <property type="protein sequence ID" value="CAJ26051.1"/>
    <property type="molecule type" value="Genomic_DNA"/>
</dbReference>
<dbReference type="RefSeq" id="WP_011349077.1">
    <property type="nucleotide sequence ID" value="NZ_CP017190.1"/>
</dbReference>
<dbReference type="SMR" id="Q3BMG2"/>
<dbReference type="STRING" id="456327.BJD11_23800"/>
<dbReference type="KEGG" id="xcv:XCV4320"/>
<dbReference type="eggNOG" id="COG1826">
    <property type="taxonomic scope" value="Bacteria"/>
</dbReference>
<dbReference type="HOGENOM" id="CLU_086034_1_1_6"/>
<dbReference type="Proteomes" id="UP000007069">
    <property type="component" value="Chromosome"/>
</dbReference>
<dbReference type="GO" id="GO:0033281">
    <property type="term" value="C:TAT protein transport complex"/>
    <property type="evidence" value="ECO:0007669"/>
    <property type="project" value="UniProtKB-UniRule"/>
</dbReference>
<dbReference type="GO" id="GO:0008320">
    <property type="term" value="F:protein transmembrane transporter activity"/>
    <property type="evidence" value="ECO:0007669"/>
    <property type="project" value="UniProtKB-UniRule"/>
</dbReference>
<dbReference type="GO" id="GO:0043953">
    <property type="term" value="P:protein transport by the Tat complex"/>
    <property type="evidence" value="ECO:0007669"/>
    <property type="project" value="UniProtKB-UniRule"/>
</dbReference>
<dbReference type="Gene3D" id="1.20.5.3310">
    <property type="match status" value="1"/>
</dbReference>
<dbReference type="HAMAP" id="MF_00237">
    <property type="entry name" value="TatB"/>
    <property type="match status" value="1"/>
</dbReference>
<dbReference type="InterPro" id="IPR003369">
    <property type="entry name" value="TatA/B/E"/>
</dbReference>
<dbReference type="InterPro" id="IPR018448">
    <property type="entry name" value="TatB"/>
</dbReference>
<dbReference type="NCBIfam" id="NF003400">
    <property type="entry name" value="PRK04654.1"/>
    <property type="match status" value="1"/>
</dbReference>
<dbReference type="NCBIfam" id="TIGR01410">
    <property type="entry name" value="tatB"/>
    <property type="match status" value="1"/>
</dbReference>
<dbReference type="PANTHER" id="PTHR33162">
    <property type="entry name" value="SEC-INDEPENDENT PROTEIN TRANSLOCASE PROTEIN TATA, CHLOROPLASTIC"/>
    <property type="match status" value="1"/>
</dbReference>
<dbReference type="PANTHER" id="PTHR33162:SF1">
    <property type="entry name" value="SEC-INDEPENDENT PROTEIN TRANSLOCASE PROTEIN TATA, CHLOROPLASTIC"/>
    <property type="match status" value="1"/>
</dbReference>
<dbReference type="Pfam" id="PF02416">
    <property type="entry name" value="TatA_B_E"/>
    <property type="match status" value="1"/>
</dbReference>
<dbReference type="PRINTS" id="PR01506">
    <property type="entry name" value="TATBPROTEIN"/>
</dbReference>
<proteinExistence type="inferred from homology"/>
<gene>
    <name evidence="1" type="primary">tatB</name>
    <name type="ordered locus">XCV4320</name>
</gene>
<sequence>MFDIGVGELTLIAVVALVVLGPERLPKAARFAGLWVRRARMQWDSVKQELERELEAEELKRSLQDVQASLREAEDQLRNTQQQVEQGARTLHDDVSRDIDIRASATPVATPLELAHADLSASPDVDATAGVTDAAGAAHTAPVIAQAQPIAPAPHQTLVPAPHDTIVPAPHAAHLASAPEPVAVAPVDAGTPAAWTPSAPAKLQEKQP</sequence>
<name>TATB_XANE5</name>
<reference key="1">
    <citation type="journal article" date="2005" name="J. Bacteriol.">
        <title>Insights into genome plasticity and pathogenicity of the plant pathogenic Bacterium Xanthomonas campestris pv. vesicatoria revealed by the complete genome sequence.</title>
        <authorList>
            <person name="Thieme F."/>
            <person name="Koebnik R."/>
            <person name="Bekel T."/>
            <person name="Berger C."/>
            <person name="Boch J."/>
            <person name="Buettner D."/>
            <person name="Caldana C."/>
            <person name="Gaigalat L."/>
            <person name="Goesmann A."/>
            <person name="Kay S."/>
            <person name="Kirchner O."/>
            <person name="Lanz C."/>
            <person name="Linke B."/>
            <person name="McHardy A.C."/>
            <person name="Meyer F."/>
            <person name="Mittenhuber G."/>
            <person name="Nies D.H."/>
            <person name="Niesbach-Kloesgen U."/>
            <person name="Patschkowski T."/>
            <person name="Rueckert C."/>
            <person name="Rupp O."/>
            <person name="Schneiker S."/>
            <person name="Schuster S.C."/>
            <person name="Vorhoelter F.J."/>
            <person name="Weber E."/>
            <person name="Puehler A."/>
            <person name="Bonas U."/>
            <person name="Bartels D."/>
            <person name="Kaiser O."/>
        </authorList>
    </citation>
    <scope>NUCLEOTIDE SEQUENCE [LARGE SCALE GENOMIC DNA]</scope>
    <source>
        <strain>85-10</strain>
    </source>
</reference>
<evidence type="ECO:0000255" key="1">
    <source>
        <dbReference type="HAMAP-Rule" id="MF_00237"/>
    </source>
</evidence>
<evidence type="ECO:0000256" key="2">
    <source>
        <dbReference type="SAM" id="MobiDB-lite"/>
    </source>
</evidence>
<feature type="chain" id="PRO_0000301249" description="Sec-independent protein translocase protein TatB">
    <location>
        <begin position="1"/>
        <end position="208"/>
    </location>
</feature>
<feature type="transmembrane region" description="Helical" evidence="1">
    <location>
        <begin position="1"/>
        <end position="21"/>
    </location>
</feature>
<feature type="region of interest" description="Disordered" evidence="2">
    <location>
        <begin position="178"/>
        <end position="208"/>
    </location>
</feature>
<feature type="compositionally biased region" description="Low complexity" evidence="2">
    <location>
        <begin position="178"/>
        <end position="189"/>
    </location>
</feature>
<comment type="function">
    <text evidence="1">Part of the twin-arginine translocation (Tat) system that transports large folded proteins containing a characteristic twin-arginine motif in their signal peptide across membranes. Together with TatC, TatB is part of a receptor directly interacting with Tat signal peptides. TatB may form an oligomeric binding site that transiently accommodates folded Tat precursor proteins before their translocation.</text>
</comment>
<comment type="subunit">
    <text evidence="1">The Tat system comprises two distinct complexes: a TatABC complex, containing multiple copies of TatA, TatB and TatC subunits, and a separate TatA complex, containing only TatA subunits. Substrates initially bind to the TatABC complex, which probably triggers association of the separate TatA complex to form the active translocon.</text>
</comment>
<comment type="subcellular location">
    <subcellularLocation>
        <location evidence="1">Cell inner membrane</location>
        <topology evidence="1">Single-pass membrane protein</topology>
    </subcellularLocation>
</comment>
<comment type="similarity">
    <text evidence="1">Belongs to the TatB family.</text>
</comment>
<accession>Q3BMG2</accession>